<gene>
    <name evidence="1" type="primary">panC</name>
    <name type="ordered locus">Sbal223_0867</name>
</gene>
<proteinExistence type="inferred from homology"/>
<protein>
    <recommendedName>
        <fullName evidence="1">Pantothenate synthetase</fullName>
        <shortName evidence="1">PS</shortName>
        <ecNumber evidence="1">6.3.2.1</ecNumber>
    </recommendedName>
    <alternativeName>
        <fullName evidence="1">Pantoate--beta-alanine ligase</fullName>
    </alternativeName>
    <alternativeName>
        <fullName evidence="1">Pantoate-activating enzyme</fullName>
    </alternativeName>
</protein>
<evidence type="ECO:0000255" key="1">
    <source>
        <dbReference type="HAMAP-Rule" id="MF_00158"/>
    </source>
</evidence>
<organism>
    <name type="scientific">Shewanella baltica (strain OS223)</name>
    <dbReference type="NCBI Taxonomy" id="407976"/>
    <lineage>
        <taxon>Bacteria</taxon>
        <taxon>Pseudomonadati</taxon>
        <taxon>Pseudomonadota</taxon>
        <taxon>Gammaproteobacteria</taxon>
        <taxon>Alteromonadales</taxon>
        <taxon>Shewanellaceae</taxon>
        <taxon>Shewanella</taxon>
    </lineage>
</organism>
<dbReference type="EC" id="6.3.2.1" evidence="1"/>
<dbReference type="EMBL" id="CP001252">
    <property type="protein sequence ID" value="ACK45385.1"/>
    <property type="molecule type" value="Genomic_DNA"/>
</dbReference>
<dbReference type="RefSeq" id="WP_012586870.1">
    <property type="nucleotide sequence ID" value="NC_011663.1"/>
</dbReference>
<dbReference type="SMR" id="B8EDX3"/>
<dbReference type="KEGG" id="sbp:Sbal223_0867"/>
<dbReference type="HOGENOM" id="CLU_047148_0_0_6"/>
<dbReference type="UniPathway" id="UPA00028">
    <property type="reaction ID" value="UER00005"/>
</dbReference>
<dbReference type="Proteomes" id="UP000002507">
    <property type="component" value="Chromosome"/>
</dbReference>
<dbReference type="GO" id="GO:0005829">
    <property type="term" value="C:cytosol"/>
    <property type="evidence" value="ECO:0007669"/>
    <property type="project" value="TreeGrafter"/>
</dbReference>
<dbReference type="GO" id="GO:0005524">
    <property type="term" value="F:ATP binding"/>
    <property type="evidence" value="ECO:0007669"/>
    <property type="project" value="UniProtKB-KW"/>
</dbReference>
<dbReference type="GO" id="GO:0004592">
    <property type="term" value="F:pantoate-beta-alanine ligase activity"/>
    <property type="evidence" value="ECO:0007669"/>
    <property type="project" value="UniProtKB-UniRule"/>
</dbReference>
<dbReference type="GO" id="GO:0015940">
    <property type="term" value="P:pantothenate biosynthetic process"/>
    <property type="evidence" value="ECO:0007669"/>
    <property type="project" value="UniProtKB-UniRule"/>
</dbReference>
<dbReference type="CDD" id="cd00560">
    <property type="entry name" value="PanC"/>
    <property type="match status" value="1"/>
</dbReference>
<dbReference type="FunFam" id="3.30.1300.10:FF:000001">
    <property type="entry name" value="Pantothenate synthetase"/>
    <property type="match status" value="1"/>
</dbReference>
<dbReference type="FunFam" id="3.40.50.620:FF:000013">
    <property type="entry name" value="Pantothenate synthetase"/>
    <property type="match status" value="1"/>
</dbReference>
<dbReference type="Gene3D" id="3.40.50.620">
    <property type="entry name" value="HUPs"/>
    <property type="match status" value="1"/>
</dbReference>
<dbReference type="Gene3D" id="3.30.1300.10">
    <property type="entry name" value="Pantoate-beta-alanine ligase, C-terminal domain"/>
    <property type="match status" value="1"/>
</dbReference>
<dbReference type="HAMAP" id="MF_00158">
    <property type="entry name" value="PanC"/>
    <property type="match status" value="1"/>
</dbReference>
<dbReference type="InterPro" id="IPR004821">
    <property type="entry name" value="Cyt_trans-like"/>
</dbReference>
<dbReference type="InterPro" id="IPR003721">
    <property type="entry name" value="Pantoate_ligase"/>
</dbReference>
<dbReference type="InterPro" id="IPR042176">
    <property type="entry name" value="Pantoate_ligase_C"/>
</dbReference>
<dbReference type="InterPro" id="IPR014729">
    <property type="entry name" value="Rossmann-like_a/b/a_fold"/>
</dbReference>
<dbReference type="NCBIfam" id="TIGR00125">
    <property type="entry name" value="cyt_tran_rel"/>
    <property type="match status" value="1"/>
</dbReference>
<dbReference type="NCBIfam" id="TIGR00018">
    <property type="entry name" value="panC"/>
    <property type="match status" value="1"/>
</dbReference>
<dbReference type="PANTHER" id="PTHR21299">
    <property type="entry name" value="CYTIDYLATE KINASE/PANTOATE-BETA-ALANINE LIGASE"/>
    <property type="match status" value="1"/>
</dbReference>
<dbReference type="PANTHER" id="PTHR21299:SF1">
    <property type="entry name" value="PANTOATE--BETA-ALANINE LIGASE"/>
    <property type="match status" value="1"/>
</dbReference>
<dbReference type="Pfam" id="PF02569">
    <property type="entry name" value="Pantoate_ligase"/>
    <property type="match status" value="1"/>
</dbReference>
<dbReference type="SUPFAM" id="SSF52374">
    <property type="entry name" value="Nucleotidylyl transferase"/>
    <property type="match status" value="1"/>
</dbReference>
<feature type="chain" id="PRO_1000123422" description="Pantothenate synthetase">
    <location>
        <begin position="1"/>
        <end position="281"/>
    </location>
</feature>
<feature type="active site" description="Proton donor" evidence="1">
    <location>
        <position position="37"/>
    </location>
</feature>
<feature type="binding site" evidence="1">
    <location>
        <begin position="30"/>
        <end position="37"/>
    </location>
    <ligand>
        <name>ATP</name>
        <dbReference type="ChEBI" id="CHEBI:30616"/>
    </ligand>
</feature>
<feature type="binding site" evidence="1">
    <location>
        <position position="61"/>
    </location>
    <ligand>
        <name>(R)-pantoate</name>
        <dbReference type="ChEBI" id="CHEBI:15980"/>
    </ligand>
</feature>
<feature type="binding site" evidence="1">
    <location>
        <position position="61"/>
    </location>
    <ligand>
        <name>beta-alanine</name>
        <dbReference type="ChEBI" id="CHEBI:57966"/>
    </ligand>
</feature>
<feature type="binding site" evidence="1">
    <location>
        <begin position="149"/>
        <end position="152"/>
    </location>
    <ligand>
        <name>ATP</name>
        <dbReference type="ChEBI" id="CHEBI:30616"/>
    </ligand>
</feature>
<feature type="binding site" evidence="1">
    <location>
        <position position="155"/>
    </location>
    <ligand>
        <name>(R)-pantoate</name>
        <dbReference type="ChEBI" id="CHEBI:15980"/>
    </ligand>
</feature>
<feature type="binding site" evidence="1">
    <location>
        <position position="178"/>
    </location>
    <ligand>
        <name>ATP</name>
        <dbReference type="ChEBI" id="CHEBI:30616"/>
    </ligand>
</feature>
<feature type="binding site" evidence="1">
    <location>
        <begin position="186"/>
        <end position="189"/>
    </location>
    <ligand>
        <name>ATP</name>
        <dbReference type="ChEBI" id="CHEBI:30616"/>
    </ligand>
</feature>
<sequence length="281" mass="30433">MITSAHIDDIRTQVRAWRAKGETVAFVPTMGNLHQGHITLVKEAASKCDHVVASIFVNPMQFGQNEDLDAYPRTLAADSEALTAAGAELLFTPTPAVMYPKGLEQQTYVEVPGISDVLCGASRPGHFRGVATIVCKLFNIVQPDVALFGNKDYQQLLVIKTMVEDLSLPIEIIGVDTIREDSGLAMSSRNGYLTAAEKAAAPALKQAIDAMAAGIKQGESFEQVTEQAKAKLVAAGFTPDYLEIRHAHTLEQAQNQDQALVILAAAYIGKARLIDNLRFDR</sequence>
<reference key="1">
    <citation type="submission" date="2008-12" db="EMBL/GenBank/DDBJ databases">
        <title>Complete sequence of chromosome of Shewanella baltica OS223.</title>
        <authorList>
            <consortium name="US DOE Joint Genome Institute"/>
            <person name="Lucas S."/>
            <person name="Copeland A."/>
            <person name="Lapidus A."/>
            <person name="Glavina del Rio T."/>
            <person name="Dalin E."/>
            <person name="Tice H."/>
            <person name="Bruce D."/>
            <person name="Goodwin L."/>
            <person name="Pitluck S."/>
            <person name="Chertkov O."/>
            <person name="Meincke L."/>
            <person name="Brettin T."/>
            <person name="Detter J.C."/>
            <person name="Han C."/>
            <person name="Kuske C.R."/>
            <person name="Larimer F."/>
            <person name="Land M."/>
            <person name="Hauser L."/>
            <person name="Kyrpides N."/>
            <person name="Ovchinnikova G."/>
            <person name="Brettar I."/>
            <person name="Rodrigues J."/>
            <person name="Konstantinidis K."/>
            <person name="Tiedje J."/>
        </authorList>
    </citation>
    <scope>NUCLEOTIDE SEQUENCE [LARGE SCALE GENOMIC DNA]</scope>
    <source>
        <strain>OS223</strain>
    </source>
</reference>
<comment type="function">
    <text evidence="1">Catalyzes the condensation of pantoate with beta-alanine in an ATP-dependent reaction via a pantoyl-adenylate intermediate.</text>
</comment>
<comment type="catalytic activity">
    <reaction evidence="1">
        <text>(R)-pantoate + beta-alanine + ATP = (R)-pantothenate + AMP + diphosphate + H(+)</text>
        <dbReference type="Rhea" id="RHEA:10912"/>
        <dbReference type="ChEBI" id="CHEBI:15378"/>
        <dbReference type="ChEBI" id="CHEBI:15980"/>
        <dbReference type="ChEBI" id="CHEBI:29032"/>
        <dbReference type="ChEBI" id="CHEBI:30616"/>
        <dbReference type="ChEBI" id="CHEBI:33019"/>
        <dbReference type="ChEBI" id="CHEBI:57966"/>
        <dbReference type="ChEBI" id="CHEBI:456215"/>
        <dbReference type="EC" id="6.3.2.1"/>
    </reaction>
</comment>
<comment type="pathway">
    <text evidence="1">Cofactor biosynthesis; (R)-pantothenate biosynthesis; (R)-pantothenate from (R)-pantoate and beta-alanine: step 1/1.</text>
</comment>
<comment type="subunit">
    <text evidence="1">Homodimer.</text>
</comment>
<comment type="subcellular location">
    <subcellularLocation>
        <location evidence="1">Cytoplasm</location>
    </subcellularLocation>
</comment>
<comment type="miscellaneous">
    <text evidence="1">The reaction proceeds by a bi uni uni bi ping pong mechanism.</text>
</comment>
<comment type="similarity">
    <text evidence="1">Belongs to the pantothenate synthetase family.</text>
</comment>
<name>PANC_SHEB2</name>
<keyword id="KW-0067">ATP-binding</keyword>
<keyword id="KW-0963">Cytoplasm</keyword>
<keyword id="KW-0436">Ligase</keyword>
<keyword id="KW-0547">Nucleotide-binding</keyword>
<keyword id="KW-0566">Pantothenate biosynthesis</keyword>
<accession>B8EDX3</accession>